<evidence type="ECO:0000255" key="1"/>
<evidence type="ECO:0000255" key="2">
    <source>
        <dbReference type="PROSITE-ProRule" id="PRU00521"/>
    </source>
</evidence>
<evidence type="ECO:0000269" key="3">
    <source>
    </source>
</evidence>
<evidence type="ECO:0000269" key="4">
    <source>
    </source>
</evidence>
<evidence type="ECO:0000269" key="5">
    <source>
    </source>
</evidence>
<evidence type="ECO:0000305" key="6"/>
<organism>
    <name type="scientific">Mus musculus</name>
    <name type="common">Mouse</name>
    <dbReference type="NCBI Taxonomy" id="10090"/>
    <lineage>
        <taxon>Eukaryota</taxon>
        <taxon>Metazoa</taxon>
        <taxon>Chordata</taxon>
        <taxon>Craniata</taxon>
        <taxon>Vertebrata</taxon>
        <taxon>Euteleostomi</taxon>
        <taxon>Mammalia</taxon>
        <taxon>Eutheria</taxon>
        <taxon>Euarchontoglires</taxon>
        <taxon>Glires</taxon>
        <taxon>Rodentia</taxon>
        <taxon>Myomorpha</taxon>
        <taxon>Muroidea</taxon>
        <taxon>Muridae</taxon>
        <taxon>Murinae</taxon>
        <taxon>Mus</taxon>
        <taxon>Mus</taxon>
    </lineage>
</organism>
<accession>Q3SXG2</accession>
<accession>Q71MR8</accession>
<protein>
    <recommendedName>
        <fullName>Formyl peptide receptor-related sequence 6</fullName>
    </recommendedName>
</protein>
<gene>
    <name type="primary">Fpr-rs6</name>
</gene>
<comment type="function">
    <text evidence="4">May have an olfactory function associated with the identification of pathogens or of pathogenic states.</text>
</comment>
<comment type="subcellular location">
    <subcellularLocation>
        <location evidence="6">Membrane</location>
        <topology evidence="6">Multi-pass membrane protein</topology>
    </subcellularLocation>
</comment>
<comment type="tissue specificity">
    <text evidence="3 4 5">Expressed exclusively in vomeronasal tissue (PubMed:19387439, PubMed:19497865). Expressed in 1.2 % of a subset of sensory neurons located in the apical layer of the vomeronasal organ. Each neuron appears to express only one receptor gene. Expressed in brain, spleen, skeletal muscle and at high level in testis (PubMed:12459252).</text>
</comment>
<comment type="similarity">
    <text evidence="2">Belongs to the G-protein coupled receptor 1 family.</text>
</comment>
<comment type="online information" name="Protein Spotlight">
    <link uri="https://www.proteinspotlight.org/back_issues/114"/>
    <text>A sickly smell - Issue 114 of February 2010</text>
</comment>
<keyword id="KW-1015">Disulfide bond</keyword>
<keyword id="KW-0297">G-protein coupled receptor</keyword>
<keyword id="KW-0325">Glycoprotein</keyword>
<keyword id="KW-0472">Membrane</keyword>
<keyword id="KW-0675">Receptor</keyword>
<keyword id="KW-1185">Reference proteome</keyword>
<keyword id="KW-0807">Transducer</keyword>
<keyword id="KW-0812">Transmembrane</keyword>
<keyword id="KW-1133">Transmembrane helix</keyword>
<dbReference type="EMBL" id="AF437512">
    <property type="protein sequence ID" value="AAN63620.1"/>
    <property type="molecule type" value="Genomic_DNA"/>
</dbReference>
<dbReference type="EMBL" id="BC104318">
    <property type="protein sequence ID" value="AAI04319.1"/>
    <property type="molecule type" value="mRNA"/>
</dbReference>
<dbReference type="EMBL" id="BC104319">
    <property type="protein sequence ID" value="AAI04320.1"/>
    <property type="molecule type" value="mRNA"/>
</dbReference>
<dbReference type="CCDS" id="CCDS28423.1"/>
<dbReference type="RefSeq" id="NP_796290.2">
    <property type="nucleotide sequence ID" value="NM_177316.2"/>
</dbReference>
<dbReference type="SMR" id="Q3SXG2"/>
<dbReference type="FunCoup" id="Q3SXG2">
    <property type="interactions" value="379"/>
</dbReference>
<dbReference type="STRING" id="10090.ENSMUSP00000093296"/>
<dbReference type="GlyCosmos" id="Q3SXG2">
    <property type="glycosylation" value="2 sites, No reported glycans"/>
</dbReference>
<dbReference type="GlyGen" id="Q3SXG2">
    <property type="glycosylation" value="2 sites"/>
</dbReference>
<dbReference type="iPTMnet" id="Q3SXG2"/>
<dbReference type="PhosphoSitePlus" id="Q3SXG2"/>
<dbReference type="PaxDb" id="10090-ENSMUSP00000093296"/>
<dbReference type="DNASU" id="321020"/>
<dbReference type="Ensembl" id="ENSMUST00000095636.2">
    <property type="protein sequence ID" value="ENSMUSP00000093296.2"/>
    <property type="gene ID" value="ENSMUSG00000071275.2"/>
</dbReference>
<dbReference type="GeneID" id="321020"/>
<dbReference type="KEGG" id="mmu:321020"/>
<dbReference type="UCSC" id="uc008apy.1">
    <property type="organism name" value="mouse"/>
</dbReference>
<dbReference type="AGR" id="MGI:2448176"/>
<dbReference type="CTD" id="321020"/>
<dbReference type="MGI" id="MGI:2448176">
    <property type="gene designation" value="Fpr-rs6"/>
</dbReference>
<dbReference type="VEuPathDB" id="HostDB:ENSMUSG00000071275"/>
<dbReference type="eggNOG" id="KOG3656">
    <property type="taxonomic scope" value="Eukaryota"/>
</dbReference>
<dbReference type="GeneTree" id="ENSGT01020000230438"/>
<dbReference type="HOGENOM" id="CLU_009579_8_0_1"/>
<dbReference type="InParanoid" id="Q3SXG2"/>
<dbReference type="OMA" id="GQNFQKR"/>
<dbReference type="OrthoDB" id="6088892at2759"/>
<dbReference type="PhylomeDB" id="Q3SXG2"/>
<dbReference type="TreeFam" id="TF330976"/>
<dbReference type="Reactome" id="R-MMU-418594">
    <property type="pathway name" value="G alpha (i) signalling events"/>
</dbReference>
<dbReference type="Reactome" id="R-MMU-444473">
    <property type="pathway name" value="Formyl peptide receptors bind formyl peptides and many other ligands"/>
</dbReference>
<dbReference type="BioGRID-ORCS" id="321020">
    <property type="hits" value="2 hits in 75 CRISPR screens"/>
</dbReference>
<dbReference type="PRO" id="PR:Q3SXG2"/>
<dbReference type="Proteomes" id="UP000000589">
    <property type="component" value="Chromosome 17"/>
</dbReference>
<dbReference type="RNAct" id="Q3SXG2">
    <property type="molecule type" value="protein"/>
</dbReference>
<dbReference type="GO" id="GO:0016020">
    <property type="term" value="C:membrane"/>
    <property type="evidence" value="ECO:0007669"/>
    <property type="project" value="UniProtKB-SubCell"/>
</dbReference>
<dbReference type="GO" id="GO:0004982">
    <property type="term" value="F:N-formyl peptide receptor activity"/>
    <property type="evidence" value="ECO:0000314"/>
    <property type="project" value="MGI"/>
</dbReference>
<dbReference type="FunFam" id="1.20.1070.10:FF:000034">
    <property type="entry name" value="G-protein coupled receptor 1"/>
    <property type="match status" value="1"/>
</dbReference>
<dbReference type="Gene3D" id="1.20.1070.10">
    <property type="entry name" value="Rhodopsin 7-helix transmembrane proteins"/>
    <property type="match status" value="1"/>
</dbReference>
<dbReference type="InterPro" id="IPR000826">
    <property type="entry name" value="Formyl_rcpt-rel"/>
</dbReference>
<dbReference type="InterPro" id="IPR000276">
    <property type="entry name" value="GPCR_Rhodpsn"/>
</dbReference>
<dbReference type="InterPro" id="IPR017452">
    <property type="entry name" value="GPCR_Rhodpsn_7TM"/>
</dbReference>
<dbReference type="PANTHER" id="PTHR24225">
    <property type="entry name" value="CHEMOTACTIC RECEPTOR"/>
    <property type="match status" value="1"/>
</dbReference>
<dbReference type="PANTHER" id="PTHR24225:SF17">
    <property type="entry name" value="FORMYL PEPTIDE RECEPTOR-RELATED SEQUENCE 6-RELATED"/>
    <property type="match status" value="1"/>
</dbReference>
<dbReference type="Pfam" id="PF00001">
    <property type="entry name" value="7tm_1"/>
    <property type="match status" value="1"/>
</dbReference>
<dbReference type="PRINTS" id="PR00526">
    <property type="entry name" value="FMETLEUPHER"/>
</dbReference>
<dbReference type="PRINTS" id="PR00237">
    <property type="entry name" value="GPCRRHODOPSN"/>
</dbReference>
<dbReference type="SUPFAM" id="SSF81321">
    <property type="entry name" value="Family A G protein-coupled receptor-like"/>
    <property type="match status" value="1"/>
</dbReference>
<dbReference type="PROSITE" id="PS00237">
    <property type="entry name" value="G_PROTEIN_RECEP_F1_1"/>
    <property type="match status" value="1"/>
</dbReference>
<dbReference type="PROSITE" id="PS50262">
    <property type="entry name" value="G_PROTEIN_RECEP_F1_2"/>
    <property type="match status" value="1"/>
</dbReference>
<reference key="1">
    <citation type="journal article" date="2002" name="Gene">
        <title>Characterization of two new members of the formyl peptide receptor gene family from 129S6 mice.</title>
        <authorList>
            <person name="Wang Z.-G."/>
            <person name="Ye R.D."/>
        </authorList>
    </citation>
    <scope>NUCLEOTIDE SEQUENCE [GENOMIC DNA]</scope>
    <scope>TISSUE SPECIFICITY</scope>
    <source>
        <strain>129S6/SvEvTac</strain>
    </source>
</reference>
<reference key="2">
    <citation type="journal article" date="2004" name="Genome Res.">
        <title>The status, quality, and expansion of the NIH full-length cDNA project: the Mammalian Gene Collection (MGC).</title>
        <authorList>
            <consortium name="The MGC Project Team"/>
        </authorList>
    </citation>
    <scope>NUCLEOTIDE SEQUENCE [LARGE SCALE MRNA]</scope>
</reference>
<reference key="3">
    <citation type="journal article" date="2009" name="Nature">
        <title>Formyl peptide receptor-like proteins are a novel family of vomeronasal chemosensors.</title>
        <authorList>
            <person name="Riviere S."/>
            <person name="Challet L."/>
            <person name="Fluegge D."/>
            <person name="Spehr M."/>
            <person name="Rodriguez I."/>
        </authorList>
    </citation>
    <scope>TISSUE SPECIFICITY</scope>
    <scope>FUNCTION</scope>
</reference>
<reference key="4">
    <citation type="journal article" date="2009" name="Proc. Natl. Acad. Sci. U.S.A.">
        <title>Formyl peptide receptors are candidate chemosensory receptors in the vomeronasal organ.</title>
        <authorList>
            <person name="Liberles S.D."/>
            <person name="Horowitz L.F."/>
            <person name="Kuang D."/>
            <person name="Contos J.J."/>
            <person name="Wilson K.L."/>
            <person name="Siltberg-Liberles J."/>
            <person name="Liberles D.A."/>
            <person name="Buck L.B."/>
        </authorList>
    </citation>
    <scope>TISSUE SPECIFICITY</scope>
</reference>
<feature type="chain" id="PRO_0000382025" description="Formyl peptide receptor-related sequence 6">
    <location>
        <begin position="1"/>
        <end position="339"/>
    </location>
</feature>
<feature type="topological domain" description="Extracellular" evidence="1">
    <location>
        <begin position="1"/>
        <end position="23"/>
    </location>
</feature>
<feature type="transmembrane region" description="Helical; Name=1" evidence="1">
    <location>
        <begin position="24"/>
        <end position="44"/>
    </location>
</feature>
<feature type="topological domain" description="Cytoplasmic" evidence="1">
    <location>
        <begin position="45"/>
        <end position="62"/>
    </location>
</feature>
<feature type="transmembrane region" description="Helical; Name=2" evidence="1">
    <location>
        <begin position="63"/>
        <end position="85"/>
    </location>
</feature>
<feature type="topological domain" description="Extracellular" evidence="1">
    <location>
        <begin position="86"/>
        <end position="99"/>
    </location>
</feature>
<feature type="transmembrane region" description="Helical; Name=3" evidence="1">
    <location>
        <begin position="100"/>
        <end position="120"/>
    </location>
</feature>
<feature type="topological domain" description="Cytoplasmic" evidence="1">
    <location>
        <begin position="121"/>
        <end position="144"/>
    </location>
</feature>
<feature type="transmembrane region" description="Helical; Name=4" evidence="1">
    <location>
        <begin position="145"/>
        <end position="165"/>
    </location>
</feature>
<feature type="topological domain" description="Extracellular" evidence="1">
    <location>
        <begin position="166"/>
        <end position="198"/>
    </location>
</feature>
<feature type="transmembrane region" description="Helical; Name=5" evidence="1">
    <location>
        <begin position="199"/>
        <end position="219"/>
    </location>
</feature>
<feature type="topological domain" description="Cytoplasmic" evidence="1">
    <location>
        <begin position="220"/>
        <end position="241"/>
    </location>
</feature>
<feature type="transmembrane region" description="Helical; Name=6" evidence="1">
    <location>
        <begin position="242"/>
        <end position="262"/>
    </location>
</feature>
<feature type="topological domain" description="Extracellular" evidence="1">
    <location>
        <begin position="263"/>
        <end position="280"/>
    </location>
</feature>
<feature type="transmembrane region" description="Helical; Name=7" evidence="1">
    <location>
        <begin position="281"/>
        <end position="301"/>
    </location>
</feature>
<feature type="topological domain" description="Cytoplasmic" evidence="1">
    <location>
        <begin position="302"/>
        <end position="339"/>
    </location>
</feature>
<feature type="glycosylation site" description="N-linked (GlcNAc...) asparagine" evidence="1">
    <location>
        <position position="4"/>
    </location>
</feature>
<feature type="glycosylation site" description="N-linked (GlcNAc...) asparagine" evidence="1">
    <location>
        <position position="10"/>
    </location>
</feature>
<feature type="disulfide bond" evidence="2">
    <location>
        <begin position="98"/>
        <end position="178"/>
    </location>
</feature>
<feature type="sequence conflict" description="In Ref. 1; AAN63620." evidence="6" ref="1">
    <original>V</original>
    <variation>I</variation>
    <location>
        <position position="32"/>
    </location>
</feature>
<feature type="sequence conflict" description="In Ref. 1; AAN63620." evidence="6" ref="1">
    <original>T</original>
    <variation>A</variation>
    <location>
        <position position="56"/>
    </location>
</feature>
<feature type="sequence conflict" description="In Ref. 1; AAN63620." evidence="6" ref="1">
    <original>V</original>
    <variation>I</variation>
    <location>
        <position position="107"/>
    </location>
</feature>
<feature type="sequence conflict" description="In Ref. 1; AAN63620." evidence="6" ref="1">
    <original>T</original>
    <variation>A</variation>
    <location>
        <position position="277"/>
    </location>
</feature>
<feature type="sequence conflict" description="In Ref. 1; AAN63620." evidence="6" ref="1">
    <original>T</original>
    <variation>P</variation>
    <location>
        <position position="281"/>
    </location>
</feature>
<feature type="sequence conflict" description="In Ref. 1; AAN63620." evidence="6" ref="1">
    <original>T</original>
    <variation>I</variation>
    <location>
        <position position="331"/>
    </location>
</feature>
<proteinExistence type="evidence at transcript level"/>
<name>FPRS6_MOUSE</name>
<sequence>MEANFSIPQNGSEVVFYDSTTSRVICIFLVVVLSITFLLGVIGNGLVIYVAGFRMTHTVTTICYLNLALSDFSYMASLPFQITSIVMNGEWLFGWFLCKFVHMIINVNLFLSIFLITFIAMDRCICVLHPVWAQNHRTVNVATKVIFGAWILVLMLIFPHCIFVTTVKDESGKVHCICNFESWAATPEEQVKVSMTVSLISVTISFIIGFSIPMIFIVICYGLMAAKIGRRGFVNSSRPLRVLTAVAISFFVCWFPFQLIFLLGNIGNKETQNNIDTWVNTASTLASFNSCLNPILYVFLGQQFRERLIYSLSASLERALREDSALNSDKTRNLSSQRL</sequence>